<organism>
    <name type="scientific">Candida albicans (strain SC5314 / ATCC MYA-2876)</name>
    <name type="common">Yeast</name>
    <dbReference type="NCBI Taxonomy" id="237561"/>
    <lineage>
        <taxon>Eukaryota</taxon>
        <taxon>Fungi</taxon>
        <taxon>Dikarya</taxon>
        <taxon>Ascomycota</taxon>
        <taxon>Saccharomycotina</taxon>
        <taxon>Pichiomycetes</taxon>
        <taxon>Debaryomycetaceae</taxon>
        <taxon>Candida/Lodderomyces clade</taxon>
        <taxon>Candida</taxon>
    </lineage>
</organism>
<keyword id="KW-0325">Glycoprotein</keyword>
<keyword id="KW-0328">Glycosyltransferase</keyword>
<keyword id="KW-0333">Golgi apparatus</keyword>
<keyword id="KW-0472">Membrane</keyword>
<keyword id="KW-1185">Reference proteome</keyword>
<keyword id="KW-0735">Signal-anchor</keyword>
<keyword id="KW-0808">Transferase</keyword>
<keyword id="KW-0812">Transmembrane</keyword>
<keyword id="KW-1133">Transmembrane helix</keyword>
<gene>
    <name type="primary">MNT4</name>
    <name type="synonym">MNN16</name>
    <name type="ordered locus">CAALFM_CR04800WA</name>
    <name type="ORF">CaO19.13690</name>
    <name type="ORF">CaO19.6313</name>
</gene>
<protein>
    <recommendedName>
        <fullName>Putative alpha-1,3-mannosyltransferase MNT4</fullName>
        <ecNumber>2.4.1.-</ecNumber>
    </recommendedName>
</protein>
<evidence type="ECO:0000250" key="1"/>
<evidence type="ECO:0000255" key="2"/>
<evidence type="ECO:0000269" key="3">
    <source>
    </source>
</evidence>
<evidence type="ECO:0000305" key="4"/>
<reference key="1">
    <citation type="journal article" date="2004" name="Proc. Natl. Acad. Sci. U.S.A.">
        <title>The diploid genome sequence of Candida albicans.</title>
        <authorList>
            <person name="Jones T."/>
            <person name="Federspiel N.A."/>
            <person name="Chibana H."/>
            <person name="Dungan J."/>
            <person name="Kalman S."/>
            <person name="Magee B.B."/>
            <person name="Newport G."/>
            <person name="Thorstenson Y.R."/>
            <person name="Agabian N."/>
            <person name="Magee P.T."/>
            <person name="Davis R.W."/>
            <person name="Scherer S."/>
        </authorList>
    </citation>
    <scope>NUCLEOTIDE SEQUENCE [LARGE SCALE GENOMIC DNA]</scope>
    <source>
        <strain>SC5314 / ATCC MYA-2876</strain>
    </source>
</reference>
<reference key="2">
    <citation type="journal article" date="2007" name="Genome Biol.">
        <title>Assembly of the Candida albicans genome into sixteen supercontigs aligned on the eight chromosomes.</title>
        <authorList>
            <person name="van het Hoog M."/>
            <person name="Rast T.J."/>
            <person name="Martchenko M."/>
            <person name="Grindle S."/>
            <person name="Dignard D."/>
            <person name="Hogues H."/>
            <person name="Cuomo C."/>
            <person name="Berriman M."/>
            <person name="Scherer S."/>
            <person name="Magee B.B."/>
            <person name="Whiteway M."/>
            <person name="Chibana H."/>
            <person name="Nantel A."/>
            <person name="Magee P.T."/>
        </authorList>
    </citation>
    <scope>GENOME REANNOTATION</scope>
    <source>
        <strain>SC5314 / ATCC MYA-2876</strain>
    </source>
</reference>
<reference key="3">
    <citation type="journal article" date="2013" name="Genome Biol.">
        <title>Assembly of a phased diploid Candida albicans genome facilitates allele-specific measurements and provides a simple model for repeat and indel structure.</title>
        <authorList>
            <person name="Muzzey D."/>
            <person name="Schwartz K."/>
            <person name="Weissman J.S."/>
            <person name="Sherlock G."/>
        </authorList>
    </citation>
    <scope>NUCLEOTIDE SEQUENCE [LARGE SCALE GENOMIC DNA]</scope>
    <scope>GENOME REANNOTATION</scope>
    <source>
        <strain>SC5314 / ATCC MYA-2876</strain>
    </source>
</reference>
<reference key="4">
    <citation type="journal article" date="2004" name="Mol. Microbiol.">
        <title>Regulatory networks affected by iron availability in Candida albicans.</title>
        <authorList>
            <person name="Lan C.Y."/>
            <person name="Rodarte G."/>
            <person name="Murillo L.A."/>
            <person name="Jones T."/>
            <person name="Davis R.W."/>
            <person name="Dungan J."/>
            <person name="Newport G."/>
            <person name="Agabian N."/>
        </authorList>
    </citation>
    <scope>INDUCTION</scope>
</reference>
<reference key="5">
    <citation type="journal article" date="2013" name="BMC Res. Notes">
        <title>Role of the Candida albicans MNN1 gene family in cell wall structure and virulence.</title>
        <authorList>
            <person name="Bates S."/>
            <person name="Hall R.A."/>
            <person name="Cheetham J."/>
            <person name="Netea M.G."/>
            <person name="MacCallum D.M."/>
            <person name="Brown A.J."/>
            <person name="Odds F.C."/>
            <person name="Gow N.A."/>
        </authorList>
    </citation>
    <scope>IDENTIFICATION</scope>
</reference>
<dbReference type="EC" id="2.4.1.-"/>
<dbReference type="EMBL" id="CP017630">
    <property type="protein sequence ID" value="AOW31213.1"/>
    <property type="molecule type" value="Genomic_DNA"/>
</dbReference>
<dbReference type="RefSeq" id="XP_711098.1">
    <property type="nucleotide sequence ID" value="XM_706006.1"/>
</dbReference>
<dbReference type="SMR" id="Q59MZ9"/>
<dbReference type="STRING" id="237561.Q59MZ9"/>
<dbReference type="GlyCosmos" id="Q59MZ9">
    <property type="glycosylation" value="3 sites, No reported glycans"/>
</dbReference>
<dbReference type="EnsemblFungi" id="CR_04800W_A-T">
    <property type="protein sequence ID" value="CR_04800W_A-T-p1"/>
    <property type="gene ID" value="CR_04800W_A"/>
</dbReference>
<dbReference type="GeneID" id="3647300"/>
<dbReference type="KEGG" id="cal:CAALFM_CR04800WA"/>
<dbReference type="CGD" id="CAL0000182375">
    <property type="gene designation" value="MNT4"/>
</dbReference>
<dbReference type="VEuPathDB" id="FungiDB:CR_04800W_A"/>
<dbReference type="eggNOG" id="ENOG502T9W7">
    <property type="taxonomic scope" value="Eukaryota"/>
</dbReference>
<dbReference type="HOGENOM" id="CLU_028276_0_0_1"/>
<dbReference type="InParanoid" id="Q59MZ9"/>
<dbReference type="OrthoDB" id="430354at2759"/>
<dbReference type="UniPathway" id="UPA00378"/>
<dbReference type="PHI-base" id="PHI:3695"/>
<dbReference type="PRO" id="PR:Q59MZ9"/>
<dbReference type="Proteomes" id="UP000000559">
    <property type="component" value="Chromosome R"/>
</dbReference>
<dbReference type="GO" id="GO:0005794">
    <property type="term" value="C:Golgi apparatus"/>
    <property type="evidence" value="ECO:0000318"/>
    <property type="project" value="GO_Central"/>
</dbReference>
<dbReference type="GO" id="GO:0000139">
    <property type="term" value="C:Golgi membrane"/>
    <property type="evidence" value="ECO:0007669"/>
    <property type="project" value="UniProtKB-SubCell"/>
</dbReference>
<dbReference type="GO" id="GO:0000033">
    <property type="term" value="F:alpha-1,3-mannosyltransferase activity"/>
    <property type="evidence" value="ECO:0000318"/>
    <property type="project" value="GO_Central"/>
</dbReference>
<dbReference type="GO" id="GO:0006493">
    <property type="term" value="P:protein O-linked glycosylation"/>
    <property type="evidence" value="ECO:0000318"/>
    <property type="project" value="GO_Central"/>
</dbReference>
<dbReference type="InterPro" id="IPR022751">
    <property type="entry name" value="Alpha_mannosyltransferase"/>
</dbReference>
<dbReference type="PANTHER" id="PTHR31392">
    <property type="entry name" value="ALPHA-1,3-MANNOSYLTRANSFERASE MNN1-RELATED"/>
    <property type="match status" value="1"/>
</dbReference>
<dbReference type="PANTHER" id="PTHR31392:SF1">
    <property type="entry name" value="ALPHA-1,3-MANNOSYLTRANSFERASE MNN1-RELATED"/>
    <property type="match status" value="1"/>
</dbReference>
<dbReference type="Pfam" id="PF11051">
    <property type="entry name" value="Mannosyl_trans3"/>
    <property type="match status" value="1"/>
</dbReference>
<sequence length="719" mass="83976">MKFHLKRYVIVTSILLSFFLLFRRQFLPLTQRQPNPINNELVSFDLIKQRNKFENPIYAKWKLSSSSPLETDLTTRCNDYFQQLLTQENFQINYHDSGYKTEPFVYKRKKWLKERIRSLRKQYKFDKNKDKYDFDQIAKQEFSIVSKNQSIHELNIYQHFSHTRIFGKCFATNNNNNNNNGVINMENPQSNQLCKSFVQKLYPWMSGNLPIFERNKERSPPQLDDSTDCIIEQIYKNSKGKGKGIIIPLMTQDKSNNQIQNIGRLIKVLRGLNNTLPIEITFMELITPEAKQQLYDIATSDSQMYPTKQDIAFVDLSPTTTNQVKGSISDSSIITLSSIFTSFEEFIILNQHIIPLIELTKFFNNERYKLHGTYFFKSPSKLKYRTTKFNIGFHEIASFIKNQLIPNKFDKHYFNLYQKGSENGDEVTIDRFFNYQFNNLIDSSLIIFNKSKTLSGLLISGNFEFLYHDDLFNIRINNTPTKTKMDYLWLGQYISGINEQIIFNFNYAIMPGILTPSQNLPKDSIECLEICSSSWGQLSDIDDISLLYITSHQLQNWLNHQKFFESLLKDKYEFKFNELVDNFLITNTNTNTNTNTNTNGNTNDKDSTKLTMGRIDLSIFEKIKTQPLKIETIIRPPTLIEPINVLGYNEPDQAWVHQDDFDRIGQNGQGQGQGQGHPFYCVYSSIGDPLKEGIRGLSINVEQSLQKKYKKLIEIWLQD</sequence>
<accession>Q59MZ9</accession>
<accession>A0A1D8PST3</accession>
<feature type="chain" id="PRO_0000424329" description="Putative alpha-1,3-mannosyltransferase MNT4">
    <location>
        <begin position="1"/>
        <end position="719"/>
    </location>
</feature>
<feature type="topological domain" description="Cytoplasmic" evidence="2">
    <location>
        <begin position="1"/>
        <end position="4"/>
    </location>
</feature>
<feature type="transmembrane region" description="Helical" evidence="2">
    <location>
        <begin position="5"/>
        <end position="22"/>
    </location>
</feature>
<feature type="topological domain" description="Lumenal" evidence="2">
    <location>
        <begin position="23"/>
        <end position="719"/>
    </location>
</feature>
<feature type="glycosylation site" description="N-linked (GlcNAc...) asparagine" evidence="2">
    <location>
        <position position="148"/>
    </location>
</feature>
<feature type="glycosylation site" description="N-linked (GlcNAc...) asparagine" evidence="2">
    <location>
        <position position="273"/>
    </location>
</feature>
<feature type="glycosylation site" description="N-linked (GlcNAc...) asparagine" evidence="2">
    <location>
        <position position="449"/>
    </location>
</feature>
<proteinExistence type="evidence at transcript level"/>
<comment type="function">
    <text evidence="1">Responsible for addition of the terminal mannose residues to the outer chain of core N-linked polysaccharides and to O-linked mannotriose. Implicated in late Golgi modifications (By similarity).</text>
</comment>
<comment type="pathway">
    <text>Protein modification; protein glycosylation.</text>
</comment>
<comment type="subcellular location">
    <subcellularLocation>
        <location evidence="1">Golgi apparatus membrane</location>
        <topology evidence="1">Single-pass type II membrane protein</topology>
    </subcellularLocation>
</comment>
<comment type="induction">
    <text evidence="3">induced in low iron conditions.</text>
</comment>
<comment type="similarity">
    <text evidence="4">Belongs to the MNN1/MNT family.</text>
</comment>
<name>MNT4_CANAL</name>